<keyword id="KW-0025">Alternative splicing</keyword>
<keyword id="KW-0472">Membrane</keyword>
<keyword id="KW-0479">Metal-binding</keyword>
<keyword id="KW-1267">Proteomics identification</keyword>
<keyword id="KW-1185">Reference proteome</keyword>
<keyword id="KW-0812">Transmembrane</keyword>
<keyword id="KW-1133">Transmembrane helix</keyword>
<keyword id="KW-0833">Ubl conjugation pathway</keyword>
<keyword id="KW-0862">Zinc</keyword>
<keyword id="KW-0863">Zinc-finger</keyword>
<sequence length="444" mass="48965">MWLFTVNQVLRKMQRRHSSNTDNIPPERNRSQALSSEASVDEGGVFESLKAEAASPPALFSGLSGSLPTSSFPSSLVLGSSAGGGDVFIQMPASREEGGGRGEGGAYHHRQPHHHFHHGGHRGGSLLQHVGGDHRGHSEEGGDEQPGTPAPALSELKAVICWLQKGLPFILILLAKLCFQHKLGIAVCIGMASTFAYANSTLREQVSLKEKRSVLVILWILAFLAGNTLYVLYTFSSQQLYNSLIFLKPNLEMLDFFDLLWIVGIADFVLKYITIALKCLIVALPKIILAVKSKGKFYLVIEELSQLFRSLVPIQLWYKYIMGDDSSNSYFLGGVLIVLYSLCKSFDICGRVGGVRKALKLLCTSQNYGVRATGQQCTEAGDICAICQAEFREPLILLCQHVFCEECLCLWLDRERTCPLCRSVAVDTLRCWKDGATSAHFQVY</sequence>
<proteinExistence type="evidence at protein level"/>
<evidence type="ECO:0000255" key="1"/>
<evidence type="ECO:0000255" key="2">
    <source>
        <dbReference type="PROSITE-ProRule" id="PRU00175"/>
    </source>
</evidence>
<evidence type="ECO:0000256" key="3">
    <source>
        <dbReference type="SAM" id="MobiDB-lite"/>
    </source>
</evidence>
<evidence type="ECO:0000269" key="4">
    <source>
    </source>
</evidence>
<evidence type="ECO:0000303" key="5">
    <source>
    </source>
</evidence>
<evidence type="ECO:0000303" key="6">
    <source>
    </source>
</evidence>
<evidence type="ECO:0000305" key="7"/>
<evidence type="ECO:0000312" key="8">
    <source>
        <dbReference type="HGNC" id="HGNC:25905"/>
    </source>
</evidence>
<organism>
    <name type="scientific">Homo sapiens</name>
    <name type="common">Human</name>
    <dbReference type="NCBI Taxonomy" id="9606"/>
    <lineage>
        <taxon>Eukaryota</taxon>
        <taxon>Metazoa</taxon>
        <taxon>Chordata</taxon>
        <taxon>Craniata</taxon>
        <taxon>Vertebrata</taxon>
        <taxon>Euteleostomi</taxon>
        <taxon>Mammalia</taxon>
        <taxon>Eutheria</taxon>
        <taxon>Euarchontoglires</taxon>
        <taxon>Primates</taxon>
        <taxon>Haplorrhini</taxon>
        <taxon>Catarrhini</taxon>
        <taxon>Hominidae</taxon>
        <taxon>Homo</taxon>
    </lineage>
</organism>
<protein>
    <recommendedName>
        <fullName evidence="7">E3 ubiquitin-protein ligase RNFT2</fullName>
    </recommendedName>
    <alternativeName>
        <fullName evidence="7">RING finger and transmembrane domain-containing protein 2</fullName>
    </alternativeName>
    <alternativeName>
        <fullName>Transmembrane protein 118</fullName>
    </alternativeName>
</protein>
<gene>
    <name evidence="8" type="primary">RNFT2</name>
    <name type="synonym">TMEM118</name>
</gene>
<comment type="function">
    <text evidence="4">E3 ubiquitin-protein ligase that negatively regulates IL3-dependent cellular responses through IL3RA ubiquitination and degradation by the proteasome, having an anti-inflammatory effect.</text>
</comment>
<comment type="subcellular location">
    <subcellularLocation>
        <location evidence="7">Membrane</location>
        <topology evidence="7">Multi-pass membrane protein</topology>
    </subcellularLocation>
</comment>
<comment type="alternative products">
    <event type="alternative splicing"/>
    <isoform>
        <id>Q96EX2-1</id>
        <name>1</name>
        <sequence type="displayed"/>
    </isoform>
    <isoform>
        <id>Q96EX2-2</id>
        <name>2</name>
        <sequence type="described" ref="VSP_023465 VSP_023466"/>
    </isoform>
    <isoform>
        <id>Q96EX2-3</id>
        <name>3</name>
        <sequence type="described" ref="VSP_035514 VSP_035515 VSP_035516"/>
    </isoform>
    <isoform>
        <id>Q96EX2-4</id>
        <name>4</name>
        <sequence type="described" ref="VSP_035513"/>
    </isoform>
    <isoform>
        <id>Q96EX2-5</id>
        <name>5</name>
        <sequence type="described" ref="VSP_035515 VSP_035516"/>
    </isoform>
</comment>
<comment type="sequence caution" evidence="7">
    <conflict type="erroneous initiation">
        <sequence resource="EMBL-CDS" id="AAH11878"/>
    </conflict>
    <text>Truncated N-terminus.</text>
</comment>
<accession>Q96EX2</accession>
<accession>E9PAM7</accession>
<accession>Q96SU5</accession>
<dbReference type="EMBL" id="AK027533">
    <property type="protein sequence ID" value="BAB55182.1"/>
    <property type="molecule type" value="mRNA"/>
</dbReference>
<dbReference type="EMBL" id="AK093164">
    <property type="status" value="NOT_ANNOTATED_CDS"/>
    <property type="molecule type" value="mRNA"/>
</dbReference>
<dbReference type="EMBL" id="AC083806">
    <property type="status" value="NOT_ANNOTATED_CDS"/>
    <property type="molecule type" value="Genomic_DNA"/>
</dbReference>
<dbReference type="EMBL" id="AC090013">
    <property type="status" value="NOT_ANNOTATED_CDS"/>
    <property type="molecule type" value="Genomic_DNA"/>
</dbReference>
<dbReference type="EMBL" id="CH471054">
    <property type="protein sequence ID" value="EAW98091.1"/>
    <property type="molecule type" value="Genomic_DNA"/>
</dbReference>
<dbReference type="EMBL" id="BC011878">
    <property type="protein sequence ID" value="AAH11878.1"/>
    <property type="status" value="ALT_INIT"/>
    <property type="molecule type" value="mRNA"/>
</dbReference>
<dbReference type="CCDS" id="CCDS44987.1">
    <molecule id="Q96EX2-1"/>
</dbReference>
<dbReference type="CCDS" id="CCDS9180.2">
    <molecule id="Q96EX2-5"/>
</dbReference>
<dbReference type="RefSeq" id="NP_001103373.1">
    <molecule id="Q96EX2-1"/>
    <property type="nucleotide sequence ID" value="NM_001109903.2"/>
</dbReference>
<dbReference type="RefSeq" id="NP_001369195.1">
    <molecule id="Q96EX2-1"/>
    <property type="nucleotide sequence ID" value="NM_001382266.1"/>
</dbReference>
<dbReference type="RefSeq" id="NP_116203.2">
    <molecule id="Q96EX2-5"/>
    <property type="nucleotide sequence ID" value="NM_032814.4"/>
</dbReference>
<dbReference type="BioGRID" id="124340">
    <property type="interactions" value="4"/>
</dbReference>
<dbReference type="FunCoup" id="Q96EX2">
    <property type="interactions" value="994"/>
</dbReference>
<dbReference type="IntAct" id="Q96EX2">
    <property type="interactions" value="1"/>
</dbReference>
<dbReference type="STRING" id="9606.ENSP00000257575"/>
<dbReference type="iPTMnet" id="Q96EX2"/>
<dbReference type="PhosphoSitePlus" id="Q96EX2"/>
<dbReference type="SwissPalm" id="Q96EX2"/>
<dbReference type="BioMuta" id="RNFT2"/>
<dbReference type="DMDM" id="143216906"/>
<dbReference type="jPOST" id="Q96EX2"/>
<dbReference type="MassIVE" id="Q96EX2"/>
<dbReference type="PaxDb" id="9606-ENSP00000257575"/>
<dbReference type="PeptideAtlas" id="Q96EX2"/>
<dbReference type="ProteomicsDB" id="19049"/>
<dbReference type="ProteomicsDB" id="76461">
    <molecule id="Q96EX2-1"/>
</dbReference>
<dbReference type="ProteomicsDB" id="76462">
    <molecule id="Q96EX2-2"/>
</dbReference>
<dbReference type="ProteomicsDB" id="76463">
    <molecule id="Q96EX2-3"/>
</dbReference>
<dbReference type="ProteomicsDB" id="76464">
    <molecule id="Q96EX2-4"/>
</dbReference>
<dbReference type="Pumba" id="Q96EX2"/>
<dbReference type="Antibodypedia" id="31315">
    <property type="antibodies" value="34 antibodies from 16 providers"/>
</dbReference>
<dbReference type="DNASU" id="84900"/>
<dbReference type="Ensembl" id="ENST00000257575.9">
    <molecule id="Q96EX2-1"/>
    <property type="protein sequence ID" value="ENSP00000257575.4"/>
    <property type="gene ID" value="ENSG00000135119.15"/>
</dbReference>
<dbReference type="Ensembl" id="ENST00000392549.7">
    <molecule id="Q96EX2-1"/>
    <property type="protein sequence ID" value="ENSP00000376332.2"/>
    <property type="gene ID" value="ENSG00000135119.15"/>
</dbReference>
<dbReference type="Ensembl" id="ENST00000407967.7">
    <molecule id="Q96EX2-5"/>
    <property type="protein sequence ID" value="ENSP00000385669.3"/>
    <property type="gene ID" value="ENSG00000135119.15"/>
</dbReference>
<dbReference type="GeneID" id="84900"/>
<dbReference type="KEGG" id="hsa:84900"/>
<dbReference type="MANE-Select" id="ENST00000257575.9">
    <property type="protein sequence ID" value="ENSP00000257575.4"/>
    <property type="RefSeq nucleotide sequence ID" value="NM_001382266.1"/>
    <property type="RefSeq protein sequence ID" value="NP_001369195.1"/>
</dbReference>
<dbReference type="UCSC" id="uc001twb.4">
    <molecule id="Q96EX2-1"/>
    <property type="organism name" value="human"/>
</dbReference>
<dbReference type="AGR" id="HGNC:25905"/>
<dbReference type="CTD" id="84900"/>
<dbReference type="DisGeNET" id="84900"/>
<dbReference type="GeneCards" id="RNFT2"/>
<dbReference type="HGNC" id="HGNC:25905">
    <property type="gene designation" value="RNFT2"/>
</dbReference>
<dbReference type="HPA" id="ENSG00000135119">
    <property type="expression patterns" value="Group enriched (brain, choroid plexus, pituitary gland, retina, testis)"/>
</dbReference>
<dbReference type="MIM" id="620254">
    <property type="type" value="gene"/>
</dbReference>
<dbReference type="neXtProt" id="NX_Q96EX2"/>
<dbReference type="OpenTargets" id="ENSG00000135119"/>
<dbReference type="PharmGKB" id="PA162401944"/>
<dbReference type="VEuPathDB" id="HostDB:ENSG00000135119"/>
<dbReference type="eggNOG" id="KOG0802">
    <property type="taxonomic scope" value="Eukaryota"/>
</dbReference>
<dbReference type="eggNOG" id="KOG4638">
    <property type="taxonomic scope" value="Eukaryota"/>
</dbReference>
<dbReference type="GeneTree" id="ENSGT00940000158419"/>
<dbReference type="HOGENOM" id="CLU_039460_2_0_1"/>
<dbReference type="InParanoid" id="Q96EX2"/>
<dbReference type="OMA" id="HHRQPPH"/>
<dbReference type="OrthoDB" id="9049620at2759"/>
<dbReference type="PAN-GO" id="Q96EX2">
    <property type="GO annotations" value="1 GO annotation based on evolutionary models"/>
</dbReference>
<dbReference type="PhylomeDB" id="Q96EX2"/>
<dbReference type="TreeFam" id="TF331930"/>
<dbReference type="PathwayCommons" id="Q96EX2"/>
<dbReference type="SignaLink" id="Q96EX2"/>
<dbReference type="SIGNOR" id="Q96EX2"/>
<dbReference type="BioGRID-ORCS" id="84900">
    <property type="hits" value="6 hits in 1185 CRISPR screens"/>
</dbReference>
<dbReference type="ChiTaRS" id="RNFT2">
    <property type="organism name" value="human"/>
</dbReference>
<dbReference type="GenomeRNAi" id="84900"/>
<dbReference type="Pharos" id="Q96EX2">
    <property type="development level" value="Tdark"/>
</dbReference>
<dbReference type="PRO" id="PR:Q96EX2"/>
<dbReference type="Proteomes" id="UP000005640">
    <property type="component" value="Chromosome 12"/>
</dbReference>
<dbReference type="RNAct" id="Q96EX2">
    <property type="molecule type" value="protein"/>
</dbReference>
<dbReference type="Bgee" id="ENSG00000135119">
    <property type="expression patterns" value="Expressed in buccal mucosa cell and 148 other cell types or tissues"/>
</dbReference>
<dbReference type="ExpressionAtlas" id="Q96EX2">
    <property type="expression patterns" value="baseline and differential"/>
</dbReference>
<dbReference type="GO" id="GO:0016020">
    <property type="term" value="C:membrane"/>
    <property type="evidence" value="ECO:0007669"/>
    <property type="project" value="UniProtKB-SubCell"/>
</dbReference>
<dbReference type="GO" id="GO:0061630">
    <property type="term" value="F:ubiquitin protein ligase activity"/>
    <property type="evidence" value="ECO:0000318"/>
    <property type="project" value="GO_Central"/>
</dbReference>
<dbReference type="GO" id="GO:0008270">
    <property type="term" value="F:zinc ion binding"/>
    <property type="evidence" value="ECO:0007669"/>
    <property type="project" value="UniProtKB-KW"/>
</dbReference>
<dbReference type="GO" id="GO:1904294">
    <property type="term" value="P:positive regulation of ERAD pathway"/>
    <property type="evidence" value="ECO:0007669"/>
    <property type="project" value="InterPro"/>
</dbReference>
<dbReference type="CDD" id="cd16742">
    <property type="entry name" value="RING-HC_RNFT2"/>
    <property type="match status" value="1"/>
</dbReference>
<dbReference type="Gene3D" id="3.30.40.10">
    <property type="entry name" value="Zinc/RING finger domain, C3HC4 (zinc finger)"/>
    <property type="match status" value="1"/>
</dbReference>
<dbReference type="InterPro" id="IPR044235">
    <property type="entry name" value="RNFT1/2"/>
</dbReference>
<dbReference type="InterPro" id="IPR001841">
    <property type="entry name" value="Znf_RING"/>
</dbReference>
<dbReference type="InterPro" id="IPR013083">
    <property type="entry name" value="Znf_RING/FYVE/PHD"/>
</dbReference>
<dbReference type="InterPro" id="IPR017907">
    <property type="entry name" value="Znf_RING_CS"/>
</dbReference>
<dbReference type="PANTHER" id="PTHR15860:SF2">
    <property type="entry name" value="RING FINGER AND TRANSMEMBRANE DOMAIN-CONTAINING PROTEIN 2"/>
    <property type="match status" value="1"/>
</dbReference>
<dbReference type="PANTHER" id="PTHR15860">
    <property type="entry name" value="UNCHARACTERIZED RING FINGER-CONTAINING PROTEIN"/>
    <property type="match status" value="1"/>
</dbReference>
<dbReference type="Pfam" id="PF13639">
    <property type="entry name" value="zf-RING_2"/>
    <property type="match status" value="1"/>
</dbReference>
<dbReference type="SMART" id="SM00184">
    <property type="entry name" value="RING"/>
    <property type="match status" value="1"/>
</dbReference>
<dbReference type="SUPFAM" id="SSF57850">
    <property type="entry name" value="RING/U-box"/>
    <property type="match status" value="1"/>
</dbReference>
<dbReference type="PROSITE" id="PS00518">
    <property type="entry name" value="ZF_RING_1"/>
    <property type="match status" value="1"/>
</dbReference>
<dbReference type="PROSITE" id="PS50089">
    <property type="entry name" value="ZF_RING_2"/>
    <property type="match status" value="1"/>
</dbReference>
<reference key="1">
    <citation type="journal article" date="2004" name="Nat. Genet.">
        <title>Complete sequencing and characterization of 21,243 full-length human cDNAs.</title>
        <authorList>
            <person name="Ota T."/>
            <person name="Suzuki Y."/>
            <person name="Nishikawa T."/>
            <person name="Otsuki T."/>
            <person name="Sugiyama T."/>
            <person name="Irie R."/>
            <person name="Wakamatsu A."/>
            <person name="Hayashi K."/>
            <person name="Sato H."/>
            <person name="Nagai K."/>
            <person name="Kimura K."/>
            <person name="Makita H."/>
            <person name="Sekine M."/>
            <person name="Obayashi M."/>
            <person name="Nishi T."/>
            <person name="Shibahara T."/>
            <person name="Tanaka T."/>
            <person name="Ishii S."/>
            <person name="Yamamoto J."/>
            <person name="Saito K."/>
            <person name="Kawai Y."/>
            <person name="Isono Y."/>
            <person name="Nakamura Y."/>
            <person name="Nagahari K."/>
            <person name="Murakami K."/>
            <person name="Yasuda T."/>
            <person name="Iwayanagi T."/>
            <person name="Wagatsuma M."/>
            <person name="Shiratori A."/>
            <person name="Sudo H."/>
            <person name="Hosoiri T."/>
            <person name="Kaku Y."/>
            <person name="Kodaira H."/>
            <person name="Kondo H."/>
            <person name="Sugawara M."/>
            <person name="Takahashi M."/>
            <person name="Kanda K."/>
            <person name="Yokoi T."/>
            <person name="Furuya T."/>
            <person name="Kikkawa E."/>
            <person name="Omura Y."/>
            <person name="Abe K."/>
            <person name="Kamihara K."/>
            <person name="Katsuta N."/>
            <person name="Sato K."/>
            <person name="Tanikawa M."/>
            <person name="Yamazaki M."/>
            <person name="Ninomiya K."/>
            <person name="Ishibashi T."/>
            <person name="Yamashita H."/>
            <person name="Murakawa K."/>
            <person name="Fujimori K."/>
            <person name="Tanai H."/>
            <person name="Kimata M."/>
            <person name="Watanabe M."/>
            <person name="Hiraoka S."/>
            <person name="Chiba Y."/>
            <person name="Ishida S."/>
            <person name="Ono Y."/>
            <person name="Takiguchi S."/>
            <person name="Watanabe S."/>
            <person name="Yosida M."/>
            <person name="Hotuta T."/>
            <person name="Kusano J."/>
            <person name="Kanehori K."/>
            <person name="Takahashi-Fujii A."/>
            <person name="Hara H."/>
            <person name="Tanase T.-O."/>
            <person name="Nomura Y."/>
            <person name="Togiya S."/>
            <person name="Komai F."/>
            <person name="Hara R."/>
            <person name="Takeuchi K."/>
            <person name="Arita M."/>
            <person name="Imose N."/>
            <person name="Musashino K."/>
            <person name="Yuuki H."/>
            <person name="Oshima A."/>
            <person name="Sasaki N."/>
            <person name="Aotsuka S."/>
            <person name="Yoshikawa Y."/>
            <person name="Matsunawa H."/>
            <person name="Ichihara T."/>
            <person name="Shiohata N."/>
            <person name="Sano S."/>
            <person name="Moriya S."/>
            <person name="Momiyama H."/>
            <person name="Satoh N."/>
            <person name="Takami S."/>
            <person name="Terashima Y."/>
            <person name="Suzuki O."/>
            <person name="Nakagawa S."/>
            <person name="Senoh A."/>
            <person name="Mizoguchi H."/>
            <person name="Goto Y."/>
            <person name="Shimizu F."/>
            <person name="Wakebe H."/>
            <person name="Hishigaki H."/>
            <person name="Watanabe T."/>
            <person name="Sugiyama A."/>
            <person name="Takemoto M."/>
            <person name="Kawakami B."/>
            <person name="Yamazaki M."/>
            <person name="Watanabe K."/>
            <person name="Kumagai A."/>
            <person name="Itakura S."/>
            <person name="Fukuzumi Y."/>
            <person name="Fujimori Y."/>
            <person name="Komiyama M."/>
            <person name="Tashiro H."/>
            <person name="Tanigami A."/>
            <person name="Fujiwara T."/>
            <person name="Ono T."/>
            <person name="Yamada K."/>
            <person name="Fujii Y."/>
            <person name="Ozaki K."/>
            <person name="Hirao M."/>
            <person name="Ohmori Y."/>
            <person name="Kawabata A."/>
            <person name="Hikiji T."/>
            <person name="Kobatake N."/>
            <person name="Inagaki H."/>
            <person name="Ikema Y."/>
            <person name="Okamoto S."/>
            <person name="Okitani R."/>
            <person name="Kawakami T."/>
            <person name="Noguchi S."/>
            <person name="Itoh T."/>
            <person name="Shigeta K."/>
            <person name="Senba T."/>
            <person name="Matsumura K."/>
            <person name="Nakajima Y."/>
            <person name="Mizuno T."/>
            <person name="Morinaga M."/>
            <person name="Sasaki M."/>
            <person name="Togashi T."/>
            <person name="Oyama M."/>
            <person name="Hata H."/>
            <person name="Watanabe M."/>
            <person name="Komatsu T."/>
            <person name="Mizushima-Sugano J."/>
            <person name="Satoh T."/>
            <person name="Shirai Y."/>
            <person name="Takahashi Y."/>
            <person name="Nakagawa K."/>
            <person name="Okumura K."/>
            <person name="Nagase T."/>
            <person name="Nomura N."/>
            <person name="Kikuchi H."/>
            <person name="Masuho Y."/>
            <person name="Yamashita R."/>
            <person name="Nakai K."/>
            <person name="Yada T."/>
            <person name="Nakamura Y."/>
            <person name="Ohara O."/>
            <person name="Isogai T."/>
            <person name="Sugano S."/>
        </authorList>
    </citation>
    <scope>NUCLEOTIDE SEQUENCE [LARGE SCALE MRNA] (ISOFORMS 3 AND 4)</scope>
    <source>
        <tissue>Teratocarcinoma</tissue>
        <tissue>Testis</tissue>
    </source>
</reference>
<reference key="2">
    <citation type="journal article" date="2006" name="Nature">
        <title>The finished DNA sequence of human chromosome 12.</title>
        <authorList>
            <person name="Scherer S.E."/>
            <person name="Muzny D.M."/>
            <person name="Buhay C.J."/>
            <person name="Chen R."/>
            <person name="Cree A."/>
            <person name="Ding Y."/>
            <person name="Dugan-Rocha S."/>
            <person name="Gill R."/>
            <person name="Gunaratne P."/>
            <person name="Harris R.A."/>
            <person name="Hawes A.C."/>
            <person name="Hernandez J."/>
            <person name="Hodgson A.V."/>
            <person name="Hume J."/>
            <person name="Jackson A."/>
            <person name="Khan Z.M."/>
            <person name="Kovar-Smith C."/>
            <person name="Lewis L.R."/>
            <person name="Lozado R.J."/>
            <person name="Metzker M.L."/>
            <person name="Milosavljevic A."/>
            <person name="Miner G.R."/>
            <person name="Montgomery K.T."/>
            <person name="Morgan M.B."/>
            <person name="Nazareth L.V."/>
            <person name="Scott G."/>
            <person name="Sodergren E."/>
            <person name="Song X.-Z."/>
            <person name="Steffen D."/>
            <person name="Lovering R.C."/>
            <person name="Wheeler D.A."/>
            <person name="Worley K.C."/>
            <person name="Yuan Y."/>
            <person name="Zhang Z."/>
            <person name="Adams C.Q."/>
            <person name="Ansari-Lari M.A."/>
            <person name="Ayele M."/>
            <person name="Brown M.J."/>
            <person name="Chen G."/>
            <person name="Chen Z."/>
            <person name="Clerc-Blankenburg K.P."/>
            <person name="Davis C."/>
            <person name="Delgado O."/>
            <person name="Dinh H.H."/>
            <person name="Draper H."/>
            <person name="Gonzalez-Garay M.L."/>
            <person name="Havlak P."/>
            <person name="Jackson L.R."/>
            <person name="Jacob L.S."/>
            <person name="Kelly S.H."/>
            <person name="Li L."/>
            <person name="Li Z."/>
            <person name="Liu J."/>
            <person name="Liu W."/>
            <person name="Lu J."/>
            <person name="Maheshwari M."/>
            <person name="Nguyen B.-V."/>
            <person name="Okwuonu G.O."/>
            <person name="Pasternak S."/>
            <person name="Perez L.M."/>
            <person name="Plopper F.J.H."/>
            <person name="Santibanez J."/>
            <person name="Shen H."/>
            <person name="Tabor P.E."/>
            <person name="Verduzco D."/>
            <person name="Waldron L."/>
            <person name="Wang Q."/>
            <person name="Williams G.A."/>
            <person name="Zhang J."/>
            <person name="Zhou J."/>
            <person name="Allen C.C."/>
            <person name="Amin A.G."/>
            <person name="Anyalebechi V."/>
            <person name="Bailey M."/>
            <person name="Barbaria J.A."/>
            <person name="Bimage K.E."/>
            <person name="Bryant N.P."/>
            <person name="Burch P.E."/>
            <person name="Burkett C.E."/>
            <person name="Burrell K.L."/>
            <person name="Calderon E."/>
            <person name="Cardenas V."/>
            <person name="Carter K."/>
            <person name="Casias K."/>
            <person name="Cavazos I."/>
            <person name="Cavazos S.R."/>
            <person name="Ceasar H."/>
            <person name="Chacko J."/>
            <person name="Chan S.N."/>
            <person name="Chavez D."/>
            <person name="Christopoulos C."/>
            <person name="Chu J."/>
            <person name="Cockrell R."/>
            <person name="Cox C.D."/>
            <person name="Dang M."/>
            <person name="Dathorne S.R."/>
            <person name="David R."/>
            <person name="Davis C.M."/>
            <person name="Davy-Carroll L."/>
            <person name="Deshazo D.R."/>
            <person name="Donlin J.E."/>
            <person name="D'Souza L."/>
            <person name="Eaves K.A."/>
            <person name="Egan A."/>
            <person name="Emery-Cohen A.J."/>
            <person name="Escotto M."/>
            <person name="Flagg N."/>
            <person name="Forbes L.D."/>
            <person name="Gabisi A.M."/>
            <person name="Garza M."/>
            <person name="Hamilton C."/>
            <person name="Henderson N."/>
            <person name="Hernandez O."/>
            <person name="Hines S."/>
            <person name="Hogues M.E."/>
            <person name="Huang M."/>
            <person name="Idlebird D.G."/>
            <person name="Johnson R."/>
            <person name="Jolivet A."/>
            <person name="Jones S."/>
            <person name="Kagan R."/>
            <person name="King L.M."/>
            <person name="Leal B."/>
            <person name="Lebow H."/>
            <person name="Lee S."/>
            <person name="LeVan J.M."/>
            <person name="Lewis L.C."/>
            <person name="London P."/>
            <person name="Lorensuhewa L.M."/>
            <person name="Loulseged H."/>
            <person name="Lovett D.A."/>
            <person name="Lucier A."/>
            <person name="Lucier R.L."/>
            <person name="Ma J."/>
            <person name="Madu R.C."/>
            <person name="Mapua P."/>
            <person name="Martindale A.D."/>
            <person name="Martinez E."/>
            <person name="Massey E."/>
            <person name="Mawhiney S."/>
            <person name="Meador M.G."/>
            <person name="Mendez S."/>
            <person name="Mercado C."/>
            <person name="Mercado I.C."/>
            <person name="Merritt C.E."/>
            <person name="Miner Z.L."/>
            <person name="Minja E."/>
            <person name="Mitchell T."/>
            <person name="Mohabbat F."/>
            <person name="Mohabbat K."/>
            <person name="Montgomery B."/>
            <person name="Moore N."/>
            <person name="Morris S."/>
            <person name="Munidasa M."/>
            <person name="Ngo R.N."/>
            <person name="Nguyen N.B."/>
            <person name="Nickerson E."/>
            <person name="Nwaokelemeh O.O."/>
            <person name="Nwokenkwo S."/>
            <person name="Obregon M."/>
            <person name="Oguh M."/>
            <person name="Oragunye N."/>
            <person name="Oviedo R.J."/>
            <person name="Parish B.J."/>
            <person name="Parker D.N."/>
            <person name="Parrish J."/>
            <person name="Parks K.L."/>
            <person name="Paul H.A."/>
            <person name="Payton B.A."/>
            <person name="Perez A."/>
            <person name="Perrin W."/>
            <person name="Pickens A."/>
            <person name="Primus E.L."/>
            <person name="Pu L.-L."/>
            <person name="Puazo M."/>
            <person name="Quiles M.M."/>
            <person name="Quiroz J.B."/>
            <person name="Rabata D."/>
            <person name="Reeves K."/>
            <person name="Ruiz S.J."/>
            <person name="Shao H."/>
            <person name="Sisson I."/>
            <person name="Sonaike T."/>
            <person name="Sorelle R.P."/>
            <person name="Sutton A.E."/>
            <person name="Svatek A.F."/>
            <person name="Svetz L.A."/>
            <person name="Tamerisa K.S."/>
            <person name="Taylor T.R."/>
            <person name="Teague B."/>
            <person name="Thomas N."/>
            <person name="Thorn R.D."/>
            <person name="Trejos Z.Y."/>
            <person name="Trevino B.K."/>
            <person name="Ukegbu O.N."/>
            <person name="Urban J.B."/>
            <person name="Vasquez L.I."/>
            <person name="Vera V.A."/>
            <person name="Villasana D.M."/>
            <person name="Wang L."/>
            <person name="Ward-Moore S."/>
            <person name="Warren J.T."/>
            <person name="Wei X."/>
            <person name="White F."/>
            <person name="Williamson A.L."/>
            <person name="Wleczyk R."/>
            <person name="Wooden H.S."/>
            <person name="Wooden S.H."/>
            <person name="Yen J."/>
            <person name="Yoon L."/>
            <person name="Yoon V."/>
            <person name="Zorrilla S.E."/>
            <person name="Nelson D."/>
            <person name="Kucherlapati R."/>
            <person name="Weinstock G."/>
            <person name="Gibbs R.A."/>
        </authorList>
    </citation>
    <scope>NUCLEOTIDE SEQUENCE [LARGE SCALE GENOMIC DNA]</scope>
</reference>
<reference key="3">
    <citation type="submission" date="2005-07" db="EMBL/GenBank/DDBJ databases">
        <authorList>
            <person name="Mural R.J."/>
            <person name="Istrail S."/>
            <person name="Sutton G.G."/>
            <person name="Florea L."/>
            <person name="Halpern A.L."/>
            <person name="Mobarry C.M."/>
            <person name="Lippert R."/>
            <person name="Walenz B."/>
            <person name="Shatkay H."/>
            <person name="Dew I."/>
            <person name="Miller J.R."/>
            <person name="Flanigan M.J."/>
            <person name="Edwards N.J."/>
            <person name="Bolanos R."/>
            <person name="Fasulo D."/>
            <person name="Halldorsson B.V."/>
            <person name="Hannenhalli S."/>
            <person name="Turner R."/>
            <person name="Yooseph S."/>
            <person name="Lu F."/>
            <person name="Nusskern D.R."/>
            <person name="Shue B.C."/>
            <person name="Zheng X.H."/>
            <person name="Zhong F."/>
            <person name="Delcher A.L."/>
            <person name="Huson D.H."/>
            <person name="Kravitz S.A."/>
            <person name="Mouchard L."/>
            <person name="Reinert K."/>
            <person name="Remington K.A."/>
            <person name="Clark A.G."/>
            <person name="Waterman M.S."/>
            <person name="Eichler E.E."/>
            <person name="Adams M.D."/>
            <person name="Hunkapiller M.W."/>
            <person name="Myers E.W."/>
            <person name="Venter J.C."/>
        </authorList>
    </citation>
    <scope>NUCLEOTIDE SEQUENCE [LARGE SCALE GENOMIC DNA]</scope>
</reference>
<reference key="4">
    <citation type="journal article" date="2004" name="Genome Res.">
        <title>The status, quality, and expansion of the NIH full-length cDNA project: the Mammalian Gene Collection (MGC).</title>
        <authorList>
            <consortium name="The MGC Project Team"/>
        </authorList>
    </citation>
    <scope>NUCLEOTIDE SEQUENCE [LARGE SCALE MRNA] (ISOFORM 2)</scope>
    <source>
        <tissue>Muscle</tissue>
    </source>
</reference>
<reference key="5">
    <citation type="journal article" date="2020" name="JCI Insight">
        <title>The RNFT2/IL-3Ralpha axis regulates IL-3 signaling and innate immunity.</title>
        <authorList>
            <person name="Tong Y."/>
            <person name="Lear T.B."/>
            <person name="Evankovich J."/>
            <person name="Chen Y."/>
            <person name="Londino J.D."/>
            <person name="Myerburg M.M."/>
            <person name="Zhang Y."/>
            <person name="Popescu I.D."/>
            <person name="McDyer J.F."/>
            <person name="McVerry B.J."/>
            <person name="Lockwood K.C."/>
            <person name="Jurczak M.J."/>
            <person name="Liu Y."/>
            <person name="Chen B.B."/>
        </authorList>
    </citation>
    <scope>FUNCTION</scope>
    <scope>MUTAGENESIS OF CYS-387; HIS-401 AND CYS-418</scope>
</reference>
<feature type="chain" id="PRO_0000279508" description="E3 ubiquitin-protein ligase RNFT2">
    <location>
        <begin position="1"/>
        <end position="444"/>
    </location>
</feature>
<feature type="topological domain" description="Extracellular" evidence="1">
    <location>
        <begin position="1"/>
        <end position="181"/>
    </location>
</feature>
<feature type="transmembrane region" description="Helical" evidence="1">
    <location>
        <begin position="182"/>
        <end position="202"/>
    </location>
</feature>
<feature type="topological domain" description="Cytoplasmic" evidence="1">
    <location>
        <begin position="203"/>
        <end position="214"/>
    </location>
</feature>
<feature type="transmembrane region" description="Helical" evidence="1">
    <location>
        <begin position="215"/>
        <end position="235"/>
    </location>
</feature>
<feature type="topological domain" description="Extracellular" evidence="1">
    <location>
        <begin position="236"/>
        <end position="255"/>
    </location>
</feature>
<feature type="transmembrane region" description="Helical" evidence="1">
    <location>
        <begin position="256"/>
        <end position="276"/>
    </location>
</feature>
<feature type="topological domain" description="Cytoplasmic" evidence="1">
    <location>
        <begin position="277"/>
        <end position="329"/>
    </location>
</feature>
<feature type="transmembrane region" description="Helical" evidence="1">
    <location>
        <begin position="330"/>
        <end position="350"/>
    </location>
</feature>
<feature type="topological domain" description="Extracellular" evidence="1">
    <location>
        <begin position="351"/>
        <end position="444"/>
    </location>
</feature>
<feature type="zinc finger region" description="RING-type" evidence="2">
    <location>
        <begin position="384"/>
        <end position="422"/>
    </location>
</feature>
<feature type="region of interest" description="Disordered" evidence="3">
    <location>
        <begin position="13"/>
        <end position="41"/>
    </location>
</feature>
<feature type="region of interest" description="Disordered" evidence="3">
    <location>
        <begin position="92"/>
        <end position="149"/>
    </location>
</feature>
<feature type="compositionally biased region" description="Basic residues" evidence="3">
    <location>
        <begin position="107"/>
        <end position="121"/>
    </location>
</feature>
<feature type="compositionally biased region" description="Basic and acidic residues" evidence="3">
    <location>
        <begin position="131"/>
        <end position="140"/>
    </location>
</feature>
<feature type="splice variant" id="VSP_035513" description="In isoform 4." evidence="5">
    <location>
        <begin position="1"/>
        <end position="252"/>
    </location>
</feature>
<feature type="splice variant" id="VSP_035514" description="In isoform 3." evidence="5">
    <location>
        <begin position="1"/>
        <end position="90"/>
    </location>
</feature>
<feature type="splice variant" id="VSP_023465" description="In isoform 2." evidence="6">
    <original>QQLYNSLIFLKPNLEMLDFFDLLWIVGIADFVLKYITIALKCLIVALPKIILAVKSKGKFYLVIEELSQLFRSLVPIQLWYKYI</original>
    <variation>EIAPQHSNLGDRVSETLSKKKKKERREGGRKEGRKERKKAQLWPRCGYPLVSCLYVFLLFLFCHLPHLSLRPVSSSCGHCHPLW</variation>
    <location>
        <begin position="238"/>
        <end position="321"/>
    </location>
</feature>
<feature type="splice variant" id="VSP_023466" description="In isoform 2." evidence="6">
    <location>
        <begin position="322"/>
        <end position="444"/>
    </location>
</feature>
<feature type="splice variant" id="VSP_035515" description="In isoform 3 and isoform 5." evidence="5">
    <original>HVFCEECLCLWLDRERTCPL</original>
    <variation>MLLKGHKKLELEKIDESAGV</variation>
    <location>
        <begin position="401"/>
        <end position="420"/>
    </location>
</feature>
<feature type="splice variant" id="VSP_035516" description="In isoform 3 and isoform 5." evidence="5">
    <location>
        <begin position="421"/>
        <end position="444"/>
    </location>
</feature>
<feature type="mutagenesis site" description="Loss of E3 ubiquitin-protein ligase activity." evidence="4">
    <original>C</original>
    <variation>A</variation>
    <location>
        <position position="387"/>
    </location>
</feature>
<feature type="mutagenesis site" description="Loss of E3 ubiquitin-protein ligase activity." evidence="4">
    <original>H</original>
    <variation>A</variation>
    <location>
        <position position="401"/>
    </location>
</feature>
<feature type="mutagenesis site" description="Loss of E3 ubiquitin-protein ligase activity." evidence="4">
    <original>C</original>
    <variation>A</variation>
    <location>
        <position position="418"/>
    </location>
</feature>
<name>RNFT2_HUMAN</name>